<comment type="function">
    <text evidence="1">Catalyzes the attachment of glutamate to tRNA(Glu) in a two-step reaction: glutamate is first activated by ATP to form Glu-AMP and then transferred to the acceptor end of tRNA(Glu).</text>
</comment>
<comment type="catalytic activity">
    <reaction evidence="1">
        <text>tRNA(Glu) + L-glutamate + ATP = L-glutamyl-tRNA(Glu) + AMP + diphosphate</text>
        <dbReference type="Rhea" id="RHEA:23540"/>
        <dbReference type="Rhea" id="RHEA-COMP:9663"/>
        <dbReference type="Rhea" id="RHEA-COMP:9680"/>
        <dbReference type="ChEBI" id="CHEBI:29985"/>
        <dbReference type="ChEBI" id="CHEBI:30616"/>
        <dbReference type="ChEBI" id="CHEBI:33019"/>
        <dbReference type="ChEBI" id="CHEBI:78442"/>
        <dbReference type="ChEBI" id="CHEBI:78520"/>
        <dbReference type="ChEBI" id="CHEBI:456215"/>
        <dbReference type="EC" id="6.1.1.17"/>
    </reaction>
</comment>
<comment type="cofactor">
    <cofactor evidence="1">
        <name>Zn(2+)</name>
        <dbReference type="ChEBI" id="CHEBI:29105"/>
    </cofactor>
    <text evidence="1">Binds 1 zinc ion per subunit.</text>
</comment>
<comment type="subunit">
    <text evidence="1">Monomer.</text>
</comment>
<comment type="subcellular location">
    <subcellularLocation>
        <location evidence="1">Cytoplasm</location>
    </subcellularLocation>
</comment>
<comment type="similarity">
    <text evidence="1">Belongs to the class-I aminoacyl-tRNA synthetase family. Glutamate--tRNA ligase type 1 subfamily.</text>
</comment>
<evidence type="ECO:0000255" key="1">
    <source>
        <dbReference type="HAMAP-Rule" id="MF_00022"/>
    </source>
</evidence>
<evidence type="ECO:0000305" key="2"/>
<reference key="1">
    <citation type="journal article" date="2002" name="Nucleic Acids Res.">
        <title>Genome sequence of Shigella flexneri 2a: insights into pathogenicity through comparison with genomes of Escherichia coli K12 and O157.</title>
        <authorList>
            <person name="Jin Q."/>
            <person name="Yuan Z."/>
            <person name="Xu J."/>
            <person name="Wang Y."/>
            <person name="Shen Y."/>
            <person name="Lu W."/>
            <person name="Wang J."/>
            <person name="Liu H."/>
            <person name="Yang J."/>
            <person name="Yang F."/>
            <person name="Zhang X."/>
            <person name="Zhang J."/>
            <person name="Yang G."/>
            <person name="Wu H."/>
            <person name="Qu D."/>
            <person name="Dong J."/>
            <person name="Sun L."/>
            <person name="Xue Y."/>
            <person name="Zhao A."/>
            <person name="Gao Y."/>
            <person name="Zhu J."/>
            <person name="Kan B."/>
            <person name="Ding K."/>
            <person name="Chen S."/>
            <person name="Cheng H."/>
            <person name="Yao Z."/>
            <person name="He B."/>
            <person name="Chen R."/>
            <person name="Ma D."/>
            <person name="Qiang B."/>
            <person name="Wen Y."/>
            <person name="Hou Y."/>
            <person name="Yu J."/>
        </authorList>
    </citation>
    <scope>NUCLEOTIDE SEQUENCE [LARGE SCALE GENOMIC DNA]</scope>
    <source>
        <strain>301 / Serotype 2a</strain>
    </source>
</reference>
<reference key="2">
    <citation type="journal article" date="2003" name="Infect. Immun.">
        <title>Complete genome sequence and comparative genomics of Shigella flexneri serotype 2a strain 2457T.</title>
        <authorList>
            <person name="Wei J."/>
            <person name="Goldberg M.B."/>
            <person name="Burland V."/>
            <person name="Venkatesan M.M."/>
            <person name="Deng W."/>
            <person name="Fournier G."/>
            <person name="Mayhew G.F."/>
            <person name="Plunkett G. III"/>
            <person name="Rose D.J."/>
            <person name="Darling A."/>
            <person name="Mau B."/>
            <person name="Perna N.T."/>
            <person name="Payne S.M."/>
            <person name="Runyen-Janecky L.J."/>
            <person name="Zhou S."/>
            <person name="Schwartz D.C."/>
            <person name="Blattner F.R."/>
        </authorList>
    </citation>
    <scope>NUCLEOTIDE SEQUENCE [LARGE SCALE GENOMIC DNA]</scope>
    <source>
        <strain>ATCC 700930 / 2457T / Serotype 2a</strain>
    </source>
</reference>
<sequence>MKIKTRFAPSPTGYLHVGGARTALYSWLFARNHGGEFVLRIEDTDLERSTPEAIEAIMDGMNWLSLEWDEGPYYQTKRFDRYNAVIDQMLEEGTAYKCYCSKERLEALREEQMAKGEKPRYDGRCRHSHEHHADDEPCVVRFANPQEGSVVFDDQIRGPIEFSNQELDDLIIRRTDGSPTYNFCVVVDDWDMEITHVIRGEDHINNTPRQINILKALKAPVPVYAHVSMINGDDGKKLSKRHGAVSVMQYRDDGYLPEALLNYLVRLGWSHGDQEIFTREEMIKYFTLNAVSKSASAFNTDKLLWLNHHYINALPPEYVATHLQWHIEQENIDTRNGPQLADLVKLLGERCKTLKEMAQSCRYFYEDFAEFDADARKKHLRPVARQPLEVVRDKLAAITDWPAENVHHAIQATADELEVGMGKVGMPLRVAVTGAGQSPALDVTVHAIGKTRSIERINKALDFIAERENQQ</sequence>
<protein>
    <recommendedName>
        <fullName evidence="1">Glutamate--tRNA ligase</fullName>
        <ecNumber evidence="1">6.1.1.17</ecNumber>
    </recommendedName>
    <alternativeName>
        <fullName evidence="1">Glutamyl-tRNA synthetase</fullName>
        <shortName evidence="1">GluRS</shortName>
    </alternativeName>
</protein>
<dbReference type="EC" id="6.1.1.17" evidence="1"/>
<dbReference type="EMBL" id="AE005674">
    <property type="protein sequence ID" value="AAN43969.1"/>
    <property type="molecule type" value="Genomic_DNA"/>
</dbReference>
<dbReference type="EMBL" id="AE014073">
    <property type="protein sequence ID" value="AAP17782.1"/>
    <property type="molecule type" value="Genomic_DNA"/>
</dbReference>
<dbReference type="RefSeq" id="NP_708262.1">
    <property type="nucleotide sequence ID" value="NC_004337.2"/>
</dbReference>
<dbReference type="RefSeq" id="WP_000695665.1">
    <property type="nucleotide sequence ID" value="NZ_CP123365.1"/>
</dbReference>
<dbReference type="SMR" id="Q83K84"/>
<dbReference type="STRING" id="198214.SF2462"/>
<dbReference type="PaxDb" id="198214-SF2462"/>
<dbReference type="GeneID" id="1025573"/>
<dbReference type="KEGG" id="sfl:SF2462"/>
<dbReference type="KEGG" id="sfx:S2605"/>
<dbReference type="PATRIC" id="fig|198214.7.peg.2941"/>
<dbReference type="HOGENOM" id="CLU_015768_6_0_6"/>
<dbReference type="Proteomes" id="UP000001006">
    <property type="component" value="Chromosome"/>
</dbReference>
<dbReference type="Proteomes" id="UP000002673">
    <property type="component" value="Chromosome"/>
</dbReference>
<dbReference type="GO" id="GO:0005829">
    <property type="term" value="C:cytosol"/>
    <property type="evidence" value="ECO:0007669"/>
    <property type="project" value="TreeGrafter"/>
</dbReference>
<dbReference type="GO" id="GO:0005524">
    <property type="term" value="F:ATP binding"/>
    <property type="evidence" value="ECO:0007669"/>
    <property type="project" value="UniProtKB-UniRule"/>
</dbReference>
<dbReference type="GO" id="GO:0004818">
    <property type="term" value="F:glutamate-tRNA ligase activity"/>
    <property type="evidence" value="ECO:0007669"/>
    <property type="project" value="UniProtKB-UniRule"/>
</dbReference>
<dbReference type="GO" id="GO:0000049">
    <property type="term" value="F:tRNA binding"/>
    <property type="evidence" value="ECO:0007669"/>
    <property type="project" value="InterPro"/>
</dbReference>
<dbReference type="GO" id="GO:0008270">
    <property type="term" value="F:zinc ion binding"/>
    <property type="evidence" value="ECO:0007669"/>
    <property type="project" value="UniProtKB-UniRule"/>
</dbReference>
<dbReference type="GO" id="GO:0006424">
    <property type="term" value="P:glutamyl-tRNA aminoacylation"/>
    <property type="evidence" value="ECO:0007669"/>
    <property type="project" value="UniProtKB-UniRule"/>
</dbReference>
<dbReference type="CDD" id="cd00808">
    <property type="entry name" value="GluRS_core"/>
    <property type="match status" value="1"/>
</dbReference>
<dbReference type="FunFam" id="1.10.10.350:FF:000001">
    <property type="entry name" value="Glutamate--tRNA ligase"/>
    <property type="match status" value="1"/>
</dbReference>
<dbReference type="FunFam" id="3.40.50.620:FF:000007">
    <property type="entry name" value="Glutamate--tRNA ligase"/>
    <property type="match status" value="1"/>
</dbReference>
<dbReference type="Gene3D" id="1.10.10.350">
    <property type="match status" value="1"/>
</dbReference>
<dbReference type="Gene3D" id="3.40.50.620">
    <property type="entry name" value="HUPs"/>
    <property type="match status" value="1"/>
</dbReference>
<dbReference type="HAMAP" id="MF_00022">
    <property type="entry name" value="Glu_tRNA_synth_type1"/>
    <property type="match status" value="1"/>
</dbReference>
<dbReference type="InterPro" id="IPR045462">
    <property type="entry name" value="aa-tRNA-synth_I_cd-bd"/>
</dbReference>
<dbReference type="InterPro" id="IPR020751">
    <property type="entry name" value="aa-tRNA-synth_I_codon-bd_sub2"/>
</dbReference>
<dbReference type="InterPro" id="IPR001412">
    <property type="entry name" value="aa-tRNA-synth_I_CS"/>
</dbReference>
<dbReference type="InterPro" id="IPR008925">
    <property type="entry name" value="aa_tRNA-synth_I_cd-bd_sf"/>
</dbReference>
<dbReference type="InterPro" id="IPR004527">
    <property type="entry name" value="Glu-tRNA-ligase_bac/mito"/>
</dbReference>
<dbReference type="InterPro" id="IPR000924">
    <property type="entry name" value="Glu/Gln-tRNA-synth"/>
</dbReference>
<dbReference type="InterPro" id="IPR020058">
    <property type="entry name" value="Glu/Gln-tRNA-synth_Ib_cat-dom"/>
</dbReference>
<dbReference type="InterPro" id="IPR049940">
    <property type="entry name" value="GluQ/Sye"/>
</dbReference>
<dbReference type="InterPro" id="IPR033910">
    <property type="entry name" value="GluRS_core"/>
</dbReference>
<dbReference type="InterPro" id="IPR014729">
    <property type="entry name" value="Rossmann-like_a/b/a_fold"/>
</dbReference>
<dbReference type="NCBIfam" id="TIGR00464">
    <property type="entry name" value="gltX_bact"/>
    <property type="match status" value="1"/>
</dbReference>
<dbReference type="PANTHER" id="PTHR43311">
    <property type="entry name" value="GLUTAMATE--TRNA LIGASE"/>
    <property type="match status" value="1"/>
</dbReference>
<dbReference type="PANTHER" id="PTHR43311:SF2">
    <property type="entry name" value="GLUTAMATE--TRNA LIGASE, MITOCHONDRIAL-RELATED"/>
    <property type="match status" value="1"/>
</dbReference>
<dbReference type="Pfam" id="PF19269">
    <property type="entry name" value="Anticodon_2"/>
    <property type="match status" value="1"/>
</dbReference>
<dbReference type="Pfam" id="PF00749">
    <property type="entry name" value="tRNA-synt_1c"/>
    <property type="match status" value="1"/>
</dbReference>
<dbReference type="PRINTS" id="PR00987">
    <property type="entry name" value="TRNASYNTHGLU"/>
</dbReference>
<dbReference type="SUPFAM" id="SSF48163">
    <property type="entry name" value="An anticodon-binding domain of class I aminoacyl-tRNA synthetases"/>
    <property type="match status" value="1"/>
</dbReference>
<dbReference type="SUPFAM" id="SSF52374">
    <property type="entry name" value="Nucleotidylyl transferase"/>
    <property type="match status" value="1"/>
</dbReference>
<dbReference type="PROSITE" id="PS00178">
    <property type="entry name" value="AA_TRNA_LIGASE_I"/>
    <property type="match status" value="1"/>
</dbReference>
<keyword id="KW-0030">Aminoacyl-tRNA synthetase</keyword>
<keyword id="KW-0067">ATP-binding</keyword>
<keyword id="KW-0963">Cytoplasm</keyword>
<keyword id="KW-0436">Ligase</keyword>
<keyword id="KW-0479">Metal-binding</keyword>
<keyword id="KW-0547">Nucleotide-binding</keyword>
<keyword id="KW-0648">Protein biosynthesis</keyword>
<keyword id="KW-1185">Reference proteome</keyword>
<keyword id="KW-0862">Zinc</keyword>
<proteinExistence type="inferred from homology"/>
<name>SYE_SHIFL</name>
<feature type="chain" id="PRO_0000119648" description="Glutamate--tRNA ligase">
    <location>
        <begin position="1"/>
        <end position="471"/>
    </location>
</feature>
<feature type="short sequence motif" description="'HIGH' region" evidence="1">
    <location>
        <begin position="9"/>
        <end position="19"/>
    </location>
</feature>
<feature type="short sequence motif" description="'KMSKS' region" evidence="1">
    <location>
        <begin position="237"/>
        <end position="241"/>
    </location>
</feature>
<feature type="binding site" evidence="1">
    <location>
        <position position="98"/>
    </location>
    <ligand>
        <name>Zn(2+)</name>
        <dbReference type="ChEBI" id="CHEBI:29105"/>
    </ligand>
</feature>
<feature type="binding site" evidence="1">
    <location>
        <position position="100"/>
    </location>
    <ligand>
        <name>Zn(2+)</name>
        <dbReference type="ChEBI" id="CHEBI:29105"/>
    </ligand>
</feature>
<feature type="binding site" evidence="1">
    <location>
        <position position="125"/>
    </location>
    <ligand>
        <name>Zn(2+)</name>
        <dbReference type="ChEBI" id="CHEBI:29105"/>
    </ligand>
</feature>
<feature type="binding site" evidence="1">
    <location>
        <position position="127"/>
    </location>
    <ligand>
        <name>Zn(2+)</name>
        <dbReference type="ChEBI" id="CHEBI:29105"/>
    </ligand>
</feature>
<feature type="binding site" evidence="1">
    <location>
        <position position="240"/>
    </location>
    <ligand>
        <name>ATP</name>
        <dbReference type="ChEBI" id="CHEBI:30616"/>
    </ligand>
</feature>
<feature type="sequence conflict" description="In Ref. 2; AAP17782." evidence="2" ref="2">
    <original>R</original>
    <variation>A</variation>
    <location>
        <position position="376"/>
    </location>
</feature>
<feature type="sequence conflict" description="In Ref. 2; AAP17782." evidence="2" ref="2">
    <original>P</original>
    <variation>T</variation>
    <location>
        <position position="402"/>
    </location>
</feature>
<organism>
    <name type="scientific">Shigella flexneri</name>
    <dbReference type="NCBI Taxonomy" id="623"/>
    <lineage>
        <taxon>Bacteria</taxon>
        <taxon>Pseudomonadati</taxon>
        <taxon>Pseudomonadota</taxon>
        <taxon>Gammaproteobacteria</taxon>
        <taxon>Enterobacterales</taxon>
        <taxon>Enterobacteriaceae</taxon>
        <taxon>Shigella</taxon>
    </lineage>
</organism>
<gene>
    <name evidence="1" type="primary">gltX</name>
    <name type="ordered locus">SF2462</name>
    <name type="ordered locus">S2605</name>
</gene>
<accession>Q83K84</accession>